<comment type="function">
    <text evidence="1">Allows the formation of correctly charged Asn-tRNA(Asn) or Gln-tRNA(Gln) through the transamidation of misacylated Asp-tRNA(Asn) or Glu-tRNA(Gln) in organisms which lack either or both of asparaginyl-tRNA or glutaminyl-tRNA synthetases. The reaction takes place in the presence of glutamine and ATP through an activated phospho-Asp-tRNA(Asn) or phospho-Glu-tRNA(Gln).</text>
</comment>
<comment type="catalytic activity">
    <reaction evidence="1">
        <text>L-glutamyl-tRNA(Gln) + L-glutamine + ATP + H2O = L-glutaminyl-tRNA(Gln) + L-glutamate + ADP + phosphate + H(+)</text>
        <dbReference type="Rhea" id="RHEA:17521"/>
        <dbReference type="Rhea" id="RHEA-COMP:9681"/>
        <dbReference type="Rhea" id="RHEA-COMP:9684"/>
        <dbReference type="ChEBI" id="CHEBI:15377"/>
        <dbReference type="ChEBI" id="CHEBI:15378"/>
        <dbReference type="ChEBI" id="CHEBI:29985"/>
        <dbReference type="ChEBI" id="CHEBI:30616"/>
        <dbReference type="ChEBI" id="CHEBI:43474"/>
        <dbReference type="ChEBI" id="CHEBI:58359"/>
        <dbReference type="ChEBI" id="CHEBI:78520"/>
        <dbReference type="ChEBI" id="CHEBI:78521"/>
        <dbReference type="ChEBI" id="CHEBI:456216"/>
    </reaction>
</comment>
<comment type="catalytic activity">
    <reaction evidence="1">
        <text>L-aspartyl-tRNA(Asn) + L-glutamine + ATP + H2O = L-asparaginyl-tRNA(Asn) + L-glutamate + ADP + phosphate + 2 H(+)</text>
        <dbReference type="Rhea" id="RHEA:14513"/>
        <dbReference type="Rhea" id="RHEA-COMP:9674"/>
        <dbReference type="Rhea" id="RHEA-COMP:9677"/>
        <dbReference type="ChEBI" id="CHEBI:15377"/>
        <dbReference type="ChEBI" id="CHEBI:15378"/>
        <dbReference type="ChEBI" id="CHEBI:29985"/>
        <dbReference type="ChEBI" id="CHEBI:30616"/>
        <dbReference type="ChEBI" id="CHEBI:43474"/>
        <dbReference type="ChEBI" id="CHEBI:58359"/>
        <dbReference type="ChEBI" id="CHEBI:78515"/>
        <dbReference type="ChEBI" id="CHEBI:78516"/>
        <dbReference type="ChEBI" id="CHEBI:456216"/>
    </reaction>
</comment>
<comment type="subunit">
    <text evidence="1">Heterotrimer of A, B and C subunits.</text>
</comment>
<comment type="similarity">
    <text evidence="1">Belongs to the GatC family.</text>
</comment>
<dbReference type="EC" id="6.3.5.-" evidence="1"/>
<dbReference type="EMBL" id="AE017194">
    <property type="protein sequence ID" value="AAS39285.1"/>
    <property type="molecule type" value="Genomic_DNA"/>
</dbReference>
<dbReference type="SMR" id="Q73EK9"/>
<dbReference type="DNASU" id="2752453"/>
<dbReference type="KEGG" id="bca:BCE_0349"/>
<dbReference type="HOGENOM" id="CLU_105899_6_1_9"/>
<dbReference type="Proteomes" id="UP000002527">
    <property type="component" value="Chromosome"/>
</dbReference>
<dbReference type="GO" id="GO:0050566">
    <property type="term" value="F:asparaginyl-tRNA synthase (glutamine-hydrolyzing) activity"/>
    <property type="evidence" value="ECO:0007669"/>
    <property type="project" value="RHEA"/>
</dbReference>
<dbReference type="GO" id="GO:0005524">
    <property type="term" value="F:ATP binding"/>
    <property type="evidence" value="ECO:0007669"/>
    <property type="project" value="UniProtKB-KW"/>
</dbReference>
<dbReference type="GO" id="GO:0050567">
    <property type="term" value="F:glutaminyl-tRNA synthase (glutamine-hydrolyzing) activity"/>
    <property type="evidence" value="ECO:0007669"/>
    <property type="project" value="UniProtKB-UniRule"/>
</dbReference>
<dbReference type="GO" id="GO:0070681">
    <property type="term" value="P:glutaminyl-tRNAGln biosynthesis via transamidation"/>
    <property type="evidence" value="ECO:0007669"/>
    <property type="project" value="TreeGrafter"/>
</dbReference>
<dbReference type="GO" id="GO:0006450">
    <property type="term" value="P:regulation of translational fidelity"/>
    <property type="evidence" value="ECO:0007669"/>
    <property type="project" value="InterPro"/>
</dbReference>
<dbReference type="GO" id="GO:0006412">
    <property type="term" value="P:translation"/>
    <property type="evidence" value="ECO:0007669"/>
    <property type="project" value="UniProtKB-UniRule"/>
</dbReference>
<dbReference type="Gene3D" id="1.10.20.60">
    <property type="entry name" value="Glu-tRNAGln amidotransferase C subunit, N-terminal domain"/>
    <property type="match status" value="1"/>
</dbReference>
<dbReference type="HAMAP" id="MF_00122">
    <property type="entry name" value="GatC"/>
    <property type="match status" value="1"/>
</dbReference>
<dbReference type="InterPro" id="IPR036113">
    <property type="entry name" value="Asp/Glu-ADT_sf_sub_c"/>
</dbReference>
<dbReference type="InterPro" id="IPR003837">
    <property type="entry name" value="GatC"/>
</dbReference>
<dbReference type="NCBIfam" id="TIGR00135">
    <property type="entry name" value="gatC"/>
    <property type="match status" value="1"/>
</dbReference>
<dbReference type="PANTHER" id="PTHR15004">
    <property type="entry name" value="GLUTAMYL-TRNA(GLN) AMIDOTRANSFERASE SUBUNIT C, MITOCHONDRIAL"/>
    <property type="match status" value="1"/>
</dbReference>
<dbReference type="PANTHER" id="PTHR15004:SF0">
    <property type="entry name" value="GLUTAMYL-TRNA(GLN) AMIDOTRANSFERASE SUBUNIT C, MITOCHONDRIAL"/>
    <property type="match status" value="1"/>
</dbReference>
<dbReference type="Pfam" id="PF02686">
    <property type="entry name" value="GatC"/>
    <property type="match status" value="1"/>
</dbReference>
<dbReference type="SUPFAM" id="SSF141000">
    <property type="entry name" value="Glu-tRNAGln amidotransferase C subunit"/>
    <property type="match status" value="1"/>
</dbReference>
<feature type="chain" id="PRO_1000016068" description="Aspartyl/glutamyl-tRNA(Asn/Gln) amidotransferase subunit C">
    <location>
        <begin position="1"/>
        <end position="96"/>
    </location>
</feature>
<proteinExistence type="inferred from homology"/>
<keyword id="KW-0067">ATP-binding</keyword>
<keyword id="KW-0436">Ligase</keyword>
<keyword id="KW-0547">Nucleotide-binding</keyword>
<keyword id="KW-0648">Protein biosynthesis</keyword>
<sequence length="96" mass="10866">MSRISVENVKHVAHLARLAITDQEAEKFQKQLDAIVTFAEQLNELDTTDVKPTTHVLTMKNVMREDVPEKGLPVEEVLKNAPDHKDNQIRVPAVLE</sequence>
<name>GATC_BACC1</name>
<organism>
    <name type="scientific">Bacillus cereus (strain ATCC 10987 / NRS 248)</name>
    <dbReference type="NCBI Taxonomy" id="222523"/>
    <lineage>
        <taxon>Bacteria</taxon>
        <taxon>Bacillati</taxon>
        <taxon>Bacillota</taxon>
        <taxon>Bacilli</taxon>
        <taxon>Bacillales</taxon>
        <taxon>Bacillaceae</taxon>
        <taxon>Bacillus</taxon>
        <taxon>Bacillus cereus group</taxon>
    </lineage>
</organism>
<protein>
    <recommendedName>
        <fullName evidence="1">Aspartyl/glutamyl-tRNA(Asn/Gln) amidotransferase subunit C</fullName>
        <shortName evidence="1">Asp/Glu-ADT subunit C</shortName>
        <ecNumber evidence="1">6.3.5.-</ecNumber>
    </recommendedName>
</protein>
<accession>Q73EK9</accession>
<gene>
    <name evidence="1" type="primary">gatC</name>
    <name type="ordered locus">BCE_0349</name>
</gene>
<reference key="1">
    <citation type="journal article" date="2004" name="Nucleic Acids Res.">
        <title>The genome sequence of Bacillus cereus ATCC 10987 reveals metabolic adaptations and a large plasmid related to Bacillus anthracis pXO1.</title>
        <authorList>
            <person name="Rasko D.A."/>
            <person name="Ravel J."/>
            <person name="Oekstad O.A."/>
            <person name="Helgason E."/>
            <person name="Cer R.Z."/>
            <person name="Jiang L."/>
            <person name="Shores K.A."/>
            <person name="Fouts D.E."/>
            <person name="Tourasse N.J."/>
            <person name="Angiuoli S.V."/>
            <person name="Kolonay J.F."/>
            <person name="Nelson W.C."/>
            <person name="Kolstoe A.-B."/>
            <person name="Fraser C.M."/>
            <person name="Read T.D."/>
        </authorList>
    </citation>
    <scope>NUCLEOTIDE SEQUENCE [LARGE SCALE GENOMIC DNA]</scope>
    <source>
        <strain>ATCC 10987 / NRS 248</strain>
    </source>
</reference>
<evidence type="ECO:0000255" key="1">
    <source>
        <dbReference type="HAMAP-Rule" id="MF_00122"/>
    </source>
</evidence>